<evidence type="ECO:0000255" key="1">
    <source>
        <dbReference type="HAMAP-Rule" id="MF_00011"/>
    </source>
</evidence>
<organism>
    <name type="scientific">Burkholderia lata (strain ATCC 17760 / DSM 23089 / LMG 22485 / NCIMB 9086 / R18194 / 383)</name>
    <dbReference type="NCBI Taxonomy" id="482957"/>
    <lineage>
        <taxon>Bacteria</taxon>
        <taxon>Pseudomonadati</taxon>
        <taxon>Pseudomonadota</taxon>
        <taxon>Betaproteobacteria</taxon>
        <taxon>Burkholderiales</taxon>
        <taxon>Burkholderiaceae</taxon>
        <taxon>Burkholderia</taxon>
        <taxon>Burkholderia cepacia complex</taxon>
    </lineage>
</organism>
<reference key="1">
    <citation type="submission" date="2005-10" db="EMBL/GenBank/DDBJ databases">
        <title>Complete sequence of chromosome 3 of Burkholderia sp. 383.</title>
        <authorList>
            <consortium name="US DOE Joint Genome Institute"/>
            <person name="Copeland A."/>
            <person name="Lucas S."/>
            <person name="Lapidus A."/>
            <person name="Barry K."/>
            <person name="Detter J.C."/>
            <person name="Glavina T."/>
            <person name="Hammon N."/>
            <person name="Israni S."/>
            <person name="Pitluck S."/>
            <person name="Chain P."/>
            <person name="Malfatti S."/>
            <person name="Shin M."/>
            <person name="Vergez L."/>
            <person name="Schmutz J."/>
            <person name="Larimer F."/>
            <person name="Land M."/>
            <person name="Kyrpides N."/>
            <person name="Lykidis A."/>
            <person name="Richardson P."/>
        </authorList>
    </citation>
    <scope>NUCLEOTIDE SEQUENCE [LARGE SCALE GENOMIC DNA]</scope>
    <source>
        <strain>ATCC 17760 / DSM 23089 / LMG 22485 / NCIMB 9086 / R18194 / 383</strain>
    </source>
</reference>
<name>PURA2_BURL3</name>
<keyword id="KW-0963">Cytoplasm</keyword>
<keyword id="KW-0342">GTP-binding</keyword>
<keyword id="KW-0436">Ligase</keyword>
<keyword id="KW-0460">Magnesium</keyword>
<keyword id="KW-0479">Metal-binding</keyword>
<keyword id="KW-0547">Nucleotide-binding</keyword>
<keyword id="KW-0658">Purine biosynthesis</keyword>
<feature type="chain" id="PRO_0000224265" description="Adenylosuccinate synthetase 2">
    <location>
        <begin position="1"/>
        <end position="432"/>
    </location>
</feature>
<feature type="active site" description="Proton acceptor" evidence="1">
    <location>
        <position position="13"/>
    </location>
</feature>
<feature type="active site" description="Proton donor" evidence="1">
    <location>
        <position position="41"/>
    </location>
</feature>
<feature type="binding site" evidence="1">
    <location>
        <begin position="12"/>
        <end position="18"/>
    </location>
    <ligand>
        <name>GTP</name>
        <dbReference type="ChEBI" id="CHEBI:37565"/>
    </ligand>
</feature>
<feature type="binding site" description="in other chain" evidence="1">
    <location>
        <begin position="13"/>
        <end position="16"/>
    </location>
    <ligand>
        <name>IMP</name>
        <dbReference type="ChEBI" id="CHEBI:58053"/>
        <note>ligand shared between dimeric partners</note>
    </ligand>
</feature>
<feature type="binding site" evidence="1">
    <location>
        <position position="13"/>
    </location>
    <ligand>
        <name>Mg(2+)</name>
        <dbReference type="ChEBI" id="CHEBI:18420"/>
    </ligand>
</feature>
<feature type="binding site" description="in other chain" evidence="1">
    <location>
        <begin position="38"/>
        <end position="41"/>
    </location>
    <ligand>
        <name>IMP</name>
        <dbReference type="ChEBI" id="CHEBI:58053"/>
        <note>ligand shared between dimeric partners</note>
    </ligand>
</feature>
<feature type="binding site" evidence="1">
    <location>
        <begin position="40"/>
        <end position="42"/>
    </location>
    <ligand>
        <name>GTP</name>
        <dbReference type="ChEBI" id="CHEBI:37565"/>
    </ligand>
</feature>
<feature type="binding site" evidence="1">
    <location>
        <position position="40"/>
    </location>
    <ligand>
        <name>Mg(2+)</name>
        <dbReference type="ChEBI" id="CHEBI:18420"/>
    </ligand>
</feature>
<feature type="binding site" description="in other chain" evidence="1">
    <location>
        <position position="128"/>
    </location>
    <ligand>
        <name>IMP</name>
        <dbReference type="ChEBI" id="CHEBI:58053"/>
        <note>ligand shared between dimeric partners</note>
    </ligand>
</feature>
<feature type="binding site" evidence="1">
    <location>
        <position position="142"/>
    </location>
    <ligand>
        <name>IMP</name>
        <dbReference type="ChEBI" id="CHEBI:58053"/>
        <note>ligand shared between dimeric partners</note>
    </ligand>
</feature>
<feature type="binding site" description="in other chain" evidence="1">
    <location>
        <position position="222"/>
    </location>
    <ligand>
        <name>IMP</name>
        <dbReference type="ChEBI" id="CHEBI:58053"/>
        <note>ligand shared between dimeric partners</note>
    </ligand>
</feature>
<feature type="binding site" description="in other chain" evidence="1">
    <location>
        <position position="237"/>
    </location>
    <ligand>
        <name>IMP</name>
        <dbReference type="ChEBI" id="CHEBI:58053"/>
        <note>ligand shared between dimeric partners</note>
    </ligand>
</feature>
<feature type="binding site" evidence="1">
    <location>
        <begin position="297"/>
        <end position="303"/>
    </location>
    <ligand>
        <name>substrate</name>
    </ligand>
</feature>
<feature type="binding site" description="in other chain" evidence="1">
    <location>
        <position position="301"/>
    </location>
    <ligand>
        <name>IMP</name>
        <dbReference type="ChEBI" id="CHEBI:58053"/>
        <note>ligand shared between dimeric partners</note>
    </ligand>
</feature>
<feature type="binding site" evidence="1">
    <location>
        <position position="303"/>
    </location>
    <ligand>
        <name>GTP</name>
        <dbReference type="ChEBI" id="CHEBI:37565"/>
    </ligand>
</feature>
<feature type="binding site" evidence="1">
    <location>
        <begin position="329"/>
        <end position="331"/>
    </location>
    <ligand>
        <name>GTP</name>
        <dbReference type="ChEBI" id="CHEBI:37565"/>
    </ligand>
</feature>
<feature type="binding site" evidence="1">
    <location>
        <begin position="411"/>
        <end position="413"/>
    </location>
    <ligand>
        <name>GTP</name>
        <dbReference type="ChEBI" id="CHEBI:37565"/>
    </ligand>
</feature>
<protein>
    <recommendedName>
        <fullName evidence="1">Adenylosuccinate synthetase 2</fullName>
        <shortName evidence="1">AMPSase 2</shortName>
        <shortName evidence="1">AdSS 2</shortName>
        <ecNumber evidence="1">6.3.4.4</ecNumber>
    </recommendedName>
    <alternativeName>
        <fullName evidence="1">IMP--aspartate ligase 2</fullName>
    </alternativeName>
</protein>
<proteinExistence type="inferred from homology"/>
<gene>
    <name evidence="1" type="primary">purA2</name>
    <name type="ordered locus">Bcep18194_C6526</name>
</gene>
<accession>Q39PN9</accession>
<dbReference type="EC" id="6.3.4.4" evidence="1"/>
<dbReference type="EMBL" id="CP000150">
    <property type="protein sequence ID" value="ABB05577.1"/>
    <property type="molecule type" value="Genomic_DNA"/>
</dbReference>
<dbReference type="RefSeq" id="WP_011349221.1">
    <property type="nucleotide sequence ID" value="NC_007509.1"/>
</dbReference>
<dbReference type="SMR" id="Q39PN9"/>
<dbReference type="GeneID" id="45091954"/>
<dbReference type="KEGG" id="bur:Bcep18194_C6526"/>
<dbReference type="PATRIC" id="fig|482957.22.peg.7020"/>
<dbReference type="HOGENOM" id="CLU_029848_0_0_4"/>
<dbReference type="UniPathway" id="UPA00075">
    <property type="reaction ID" value="UER00335"/>
</dbReference>
<dbReference type="Proteomes" id="UP000002705">
    <property type="component" value="Chromosome 3"/>
</dbReference>
<dbReference type="GO" id="GO:0005737">
    <property type="term" value="C:cytoplasm"/>
    <property type="evidence" value="ECO:0007669"/>
    <property type="project" value="UniProtKB-SubCell"/>
</dbReference>
<dbReference type="GO" id="GO:0004019">
    <property type="term" value="F:adenylosuccinate synthase activity"/>
    <property type="evidence" value="ECO:0007669"/>
    <property type="project" value="UniProtKB-UniRule"/>
</dbReference>
<dbReference type="GO" id="GO:0005525">
    <property type="term" value="F:GTP binding"/>
    <property type="evidence" value="ECO:0007669"/>
    <property type="project" value="UniProtKB-UniRule"/>
</dbReference>
<dbReference type="GO" id="GO:0000287">
    <property type="term" value="F:magnesium ion binding"/>
    <property type="evidence" value="ECO:0007669"/>
    <property type="project" value="UniProtKB-UniRule"/>
</dbReference>
<dbReference type="GO" id="GO:0044208">
    <property type="term" value="P:'de novo' AMP biosynthetic process"/>
    <property type="evidence" value="ECO:0007669"/>
    <property type="project" value="UniProtKB-UniRule"/>
</dbReference>
<dbReference type="GO" id="GO:0046040">
    <property type="term" value="P:IMP metabolic process"/>
    <property type="evidence" value="ECO:0007669"/>
    <property type="project" value="TreeGrafter"/>
</dbReference>
<dbReference type="CDD" id="cd03108">
    <property type="entry name" value="AdSS"/>
    <property type="match status" value="1"/>
</dbReference>
<dbReference type="FunFam" id="1.10.300.10:FF:000001">
    <property type="entry name" value="Adenylosuccinate synthetase"/>
    <property type="match status" value="1"/>
</dbReference>
<dbReference type="FunFam" id="3.90.170.10:FF:000001">
    <property type="entry name" value="Adenylosuccinate synthetase"/>
    <property type="match status" value="1"/>
</dbReference>
<dbReference type="Gene3D" id="3.40.440.10">
    <property type="entry name" value="Adenylosuccinate Synthetase, subunit A, domain 1"/>
    <property type="match status" value="1"/>
</dbReference>
<dbReference type="Gene3D" id="1.10.300.10">
    <property type="entry name" value="Adenylosuccinate Synthetase, subunit A, domain 2"/>
    <property type="match status" value="1"/>
</dbReference>
<dbReference type="Gene3D" id="3.90.170.10">
    <property type="entry name" value="Adenylosuccinate Synthetase, subunit A, domain 3"/>
    <property type="match status" value="1"/>
</dbReference>
<dbReference type="HAMAP" id="MF_00011">
    <property type="entry name" value="Adenylosucc_synth"/>
    <property type="match status" value="1"/>
</dbReference>
<dbReference type="InterPro" id="IPR018220">
    <property type="entry name" value="Adenylosuccin_syn_GTP-bd"/>
</dbReference>
<dbReference type="InterPro" id="IPR033128">
    <property type="entry name" value="Adenylosuccin_syn_Lys_AS"/>
</dbReference>
<dbReference type="InterPro" id="IPR042109">
    <property type="entry name" value="Adenylosuccinate_synth_dom1"/>
</dbReference>
<dbReference type="InterPro" id="IPR042110">
    <property type="entry name" value="Adenylosuccinate_synth_dom2"/>
</dbReference>
<dbReference type="InterPro" id="IPR042111">
    <property type="entry name" value="Adenylosuccinate_synth_dom3"/>
</dbReference>
<dbReference type="InterPro" id="IPR001114">
    <property type="entry name" value="Adenylosuccinate_synthetase"/>
</dbReference>
<dbReference type="InterPro" id="IPR027417">
    <property type="entry name" value="P-loop_NTPase"/>
</dbReference>
<dbReference type="NCBIfam" id="NF002223">
    <property type="entry name" value="PRK01117.1"/>
    <property type="match status" value="1"/>
</dbReference>
<dbReference type="NCBIfam" id="TIGR00184">
    <property type="entry name" value="purA"/>
    <property type="match status" value="1"/>
</dbReference>
<dbReference type="PANTHER" id="PTHR11846">
    <property type="entry name" value="ADENYLOSUCCINATE SYNTHETASE"/>
    <property type="match status" value="1"/>
</dbReference>
<dbReference type="PANTHER" id="PTHR11846:SF0">
    <property type="entry name" value="ADENYLOSUCCINATE SYNTHETASE"/>
    <property type="match status" value="1"/>
</dbReference>
<dbReference type="Pfam" id="PF00709">
    <property type="entry name" value="Adenylsucc_synt"/>
    <property type="match status" value="1"/>
</dbReference>
<dbReference type="SMART" id="SM00788">
    <property type="entry name" value="Adenylsucc_synt"/>
    <property type="match status" value="1"/>
</dbReference>
<dbReference type="SUPFAM" id="SSF52540">
    <property type="entry name" value="P-loop containing nucleoside triphosphate hydrolases"/>
    <property type="match status" value="1"/>
</dbReference>
<dbReference type="PROSITE" id="PS01266">
    <property type="entry name" value="ADENYLOSUCCIN_SYN_1"/>
    <property type="match status" value="1"/>
</dbReference>
<dbReference type="PROSITE" id="PS00513">
    <property type="entry name" value="ADENYLOSUCCIN_SYN_2"/>
    <property type="match status" value="1"/>
</dbReference>
<sequence>MPNVVVVGAQWGDEGKGRVVDWLAAQADLVARYNGGHNAGHTLVVGGKTYKLALLPSGVVRGKRGVIGNGVALDPEALLAEIGRMAELGLSVTPDNLSIAENATLVLPIHRAIDQAQERLRREPIGTTLRGIGPAYEDKVGRRGLRVGDLAEPGRLAAKLDVLVDHHNAWFRGLGLDEYSRDAMLATLVDLAPRILPFVRPVWADLNDATDRGERILFEGSQAVMLDIDWGTYPFVTSSGTVASAAAAGTGLGASKLGHVLGVTKAYATRVGGGPFLTELSDATGETLRARGQEFGVNTGRPRRCGWLDAAQLRQAVRISGIDSLALTKLDVLDGFESIELCVGYEFDGARVDHLPASLDAQSRAKPVYERFDGWRGTVKGVRERAALPRAAQDFIARVEAVAGAPVSMITTGAERDDTIVLRNPFDAAAGA</sequence>
<comment type="function">
    <text evidence="1">Plays an important role in the de novo pathway of purine nucleotide biosynthesis. Catalyzes the first committed step in the biosynthesis of AMP from IMP.</text>
</comment>
<comment type="catalytic activity">
    <reaction evidence="1">
        <text>IMP + L-aspartate + GTP = N(6)-(1,2-dicarboxyethyl)-AMP + GDP + phosphate + 2 H(+)</text>
        <dbReference type="Rhea" id="RHEA:15753"/>
        <dbReference type="ChEBI" id="CHEBI:15378"/>
        <dbReference type="ChEBI" id="CHEBI:29991"/>
        <dbReference type="ChEBI" id="CHEBI:37565"/>
        <dbReference type="ChEBI" id="CHEBI:43474"/>
        <dbReference type="ChEBI" id="CHEBI:57567"/>
        <dbReference type="ChEBI" id="CHEBI:58053"/>
        <dbReference type="ChEBI" id="CHEBI:58189"/>
        <dbReference type="EC" id="6.3.4.4"/>
    </reaction>
</comment>
<comment type="cofactor">
    <cofactor evidence="1">
        <name>Mg(2+)</name>
        <dbReference type="ChEBI" id="CHEBI:18420"/>
    </cofactor>
    <text evidence="1">Binds 1 Mg(2+) ion per subunit.</text>
</comment>
<comment type="pathway">
    <text evidence="1">Purine metabolism; AMP biosynthesis via de novo pathway; AMP from IMP: step 1/2.</text>
</comment>
<comment type="subunit">
    <text evidence="1">Homodimer.</text>
</comment>
<comment type="subcellular location">
    <subcellularLocation>
        <location evidence="1">Cytoplasm</location>
    </subcellularLocation>
</comment>
<comment type="similarity">
    <text evidence="1">Belongs to the adenylosuccinate synthetase family.</text>
</comment>